<name>LIPL_BACAN</name>
<accession>Q81JR5</accession>
<accession>E9QRP6</accession>
<accession>E9QRP7</accession>
<accession>Q6HQB3</accession>
<accession>Q6KJP4</accession>
<proteinExistence type="inferred from homology"/>
<reference key="1">
    <citation type="journal article" date="2003" name="Nature">
        <title>The genome sequence of Bacillus anthracis Ames and comparison to closely related bacteria.</title>
        <authorList>
            <person name="Read T.D."/>
            <person name="Peterson S.N."/>
            <person name="Tourasse N.J."/>
            <person name="Baillie L.W."/>
            <person name="Paulsen I.T."/>
            <person name="Nelson K.E."/>
            <person name="Tettelin H."/>
            <person name="Fouts D.E."/>
            <person name="Eisen J.A."/>
            <person name="Gill S.R."/>
            <person name="Holtzapple E.K."/>
            <person name="Okstad O.A."/>
            <person name="Helgason E."/>
            <person name="Rilstone J."/>
            <person name="Wu M."/>
            <person name="Kolonay J.F."/>
            <person name="Beanan M.J."/>
            <person name="Dodson R.J."/>
            <person name="Brinkac L.M."/>
            <person name="Gwinn M.L."/>
            <person name="DeBoy R.T."/>
            <person name="Madpu R."/>
            <person name="Daugherty S.C."/>
            <person name="Durkin A.S."/>
            <person name="Haft D.H."/>
            <person name="Nelson W.C."/>
            <person name="Peterson J.D."/>
            <person name="Pop M."/>
            <person name="Khouri H.M."/>
            <person name="Radune D."/>
            <person name="Benton J.L."/>
            <person name="Mahamoud Y."/>
            <person name="Jiang L."/>
            <person name="Hance I.R."/>
            <person name="Weidman J.F."/>
            <person name="Berry K.J."/>
            <person name="Plaut R.D."/>
            <person name="Wolf A.M."/>
            <person name="Watkins K.L."/>
            <person name="Nierman W.C."/>
            <person name="Hazen A."/>
            <person name="Cline R.T."/>
            <person name="Redmond C."/>
            <person name="Thwaite J.E."/>
            <person name="White O."/>
            <person name="Salzberg S.L."/>
            <person name="Thomason B."/>
            <person name="Friedlander A.M."/>
            <person name="Koehler T.M."/>
            <person name="Hanna P.C."/>
            <person name="Kolstoe A.-B."/>
            <person name="Fraser C.M."/>
        </authorList>
    </citation>
    <scope>NUCLEOTIDE SEQUENCE [LARGE SCALE GENOMIC DNA]</scope>
    <source>
        <strain>Ames / isolate Porton</strain>
    </source>
</reference>
<reference key="2">
    <citation type="journal article" date="2009" name="J. Bacteriol.">
        <title>The complete genome sequence of Bacillus anthracis Ames 'Ancestor'.</title>
        <authorList>
            <person name="Ravel J."/>
            <person name="Jiang L."/>
            <person name="Stanley S.T."/>
            <person name="Wilson M.R."/>
            <person name="Decker R.S."/>
            <person name="Read T.D."/>
            <person name="Worsham P."/>
            <person name="Keim P.S."/>
            <person name="Salzberg S.L."/>
            <person name="Fraser-Liggett C.M."/>
            <person name="Rasko D.A."/>
        </authorList>
    </citation>
    <scope>NUCLEOTIDE SEQUENCE [LARGE SCALE GENOMIC DNA]</scope>
    <source>
        <strain>Ames ancestor</strain>
    </source>
</reference>
<reference key="3">
    <citation type="submission" date="2004-01" db="EMBL/GenBank/DDBJ databases">
        <title>Complete genome sequence of Bacillus anthracis Sterne.</title>
        <authorList>
            <person name="Brettin T.S."/>
            <person name="Bruce D."/>
            <person name="Challacombe J.F."/>
            <person name="Gilna P."/>
            <person name="Han C."/>
            <person name="Hill K."/>
            <person name="Hitchcock P."/>
            <person name="Jackson P."/>
            <person name="Keim P."/>
            <person name="Longmire J."/>
            <person name="Lucas S."/>
            <person name="Okinaka R."/>
            <person name="Richardson P."/>
            <person name="Rubin E."/>
            <person name="Tice H."/>
        </authorList>
    </citation>
    <scope>NUCLEOTIDE SEQUENCE [LARGE SCALE GENOMIC DNA]</scope>
    <source>
        <strain>Sterne</strain>
    </source>
</reference>
<dbReference type="EC" id="2.3.1.204" evidence="1"/>
<dbReference type="EMBL" id="AE016879">
    <property type="protein sequence ID" value="AAP29271.1"/>
    <property type="molecule type" value="Genomic_DNA"/>
</dbReference>
<dbReference type="EMBL" id="AE017334">
    <property type="protein sequence ID" value="AAT34785.1"/>
    <property type="molecule type" value="Genomic_DNA"/>
</dbReference>
<dbReference type="EMBL" id="AE017225">
    <property type="protein sequence ID" value="AAT57525.1"/>
    <property type="molecule type" value="Genomic_DNA"/>
</dbReference>
<dbReference type="RefSeq" id="NP_847785.1">
    <property type="nucleotide sequence ID" value="NC_003997.3"/>
</dbReference>
<dbReference type="RefSeq" id="WP_000071929.1">
    <property type="nucleotide sequence ID" value="NZ_WXXJ01000017.1"/>
</dbReference>
<dbReference type="RefSeq" id="YP_031475.1">
    <property type="nucleotide sequence ID" value="NC_005945.1"/>
</dbReference>
<dbReference type="SMR" id="Q81JR5"/>
<dbReference type="STRING" id="261594.GBAA_5635"/>
<dbReference type="DNASU" id="1085352"/>
<dbReference type="GeneID" id="45025213"/>
<dbReference type="KEGG" id="ban:BA_5635"/>
<dbReference type="KEGG" id="banh:HYU01_27505"/>
<dbReference type="KEGG" id="bar:GBAA_5635"/>
<dbReference type="KEGG" id="bat:BAS5237"/>
<dbReference type="PATRIC" id="fig|198094.11.peg.5594"/>
<dbReference type="eggNOG" id="COG0095">
    <property type="taxonomic scope" value="Bacteria"/>
</dbReference>
<dbReference type="HOGENOM" id="CLU_067270_0_0_9"/>
<dbReference type="OMA" id="VQIYLCI"/>
<dbReference type="OrthoDB" id="2080934at2"/>
<dbReference type="Proteomes" id="UP000000427">
    <property type="component" value="Chromosome"/>
</dbReference>
<dbReference type="Proteomes" id="UP000000594">
    <property type="component" value="Chromosome"/>
</dbReference>
<dbReference type="GO" id="GO:0033819">
    <property type="term" value="F:lipoyl(octanoyl) transferase activity"/>
    <property type="evidence" value="ECO:0007669"/>
    <property type="project" value="InterPro"/>
</dbReference>
<dbReference type="GO" id="GO:0009107">
    <property type="term" value="P:lipoate biosynthetic process"/>
    <property type="evidence" value="ECO:0007669"/>
    <property type="project" value="UniProtKB-UniRule"/>
</dbReference>
<dbReference type="GO" id="GO:0036211">
    <property type="term" value="P:protein modification process"/>
    <property type="evidence" value="ECO:0007669"/>
    <property type="project" value="InterPro"/>
</dbReference>
<dbReference type="CDD" id="cd16443">
    <property type="entry name" value="LplA"/>
    <property type="match status" value="1"/>
</dbReference>
<dbReference type="Gene3D" id="3.30.930.10">
    <property type="entry name" value="Bira Bifunctional Protein, Domain 2"/>
    <property type="match status" value="1"/>
</dbReference>
<dbReference type="HAMAP" id="MF_02119">
    <property type="entry name" value="LipL"/>
    <property type="match status" value="1"/>
</dbReference>
<dbReference type="InterPro" id="IPR045864">
    <property type="entry name" value="aa-tRNA-synth_II/BPL/LPL"/>
</dbReference>
<dbReference type="InterPro" id="IPR004143">
    <property type="entry name" value="BPL_LPL_catalytic"/>
</dbReference>
<dbReference type="InterPro" id="IPR024897">
    <property type="entry name" value="LipL"/>
</dbReference>
<dbReference type="InterPro" id="IPR050664">
    <property type="entry name" value="Octanoyltrans_LipM/LipL"/>
</dbReference>
<dbReference type="PANTHER" id="PTHR43679:SF2">
    <property type="entry name" value="OCTANOYL-[GCVH]:PROTEIN N-OCTANOYLTRANSFERASE"/>
    <property type="match status" value="1"/>
</dbReference>
<dbReference type="PANTHER" id="PTHR43679">
    <property type="entry name" value="OCTANOYLTRANSFERASE LIPM-RELATED"/>
    <property type="match status" value="1"/>
</dbReference>
<dbReference type="Pfam" id="PF21948">
    <property type="entry name" value="LplA-B_cat"/>
    <property type="match status" value="1"/>
</dbReference>
<dbReference type="SUPFAM" id="SSF55681">
    <property type="entry name" value="Class II aaRS and biotin synthetases"/>
    <property type="match status" value="1"/>
</dbReference>
<dbReference type="PROSITE" id="PS51733">
    <property type="entry name" value="BPL_LPL_CATALYTIC"/>
    <property type="match status" value="1"/>
</dbReference>
<keyword id="KW-0012">Acyltransferase</keyword>
<keyword id="KW-1185">Reference proteome</keyword>
<keyword id="KW-0808">Transferase</keyword>
<feature type="chain" id="PRO_0000410834" description="Octanoyl-[GcvH]:protein N-octanoyltransferase">
    <location>
        <begin position="1"/>
        <end position="281"/>
    </location>
</feature>
<feature type="domain" description="BPL/LPL catalytic" evidence="2">
    <location>
        <begin position="44"/>
        <end position="250"/>
    </location>
</feature>
<feature type="active site" description="Acyl-thioester intermediate" evidence="1">
    <location>
        <position position="149"/>
    </location>
</feature>
<feature type="site" description="Lowers pKa of active site Cys" evidence="1">
    <location>
        <position position="161"/>
    </location>
</feature>
<protein>
    <recommendedName>
        <fullName evidence="1">Octanoyl-[GcvH]:protein N-octanoyltransferase</fullName>
        <ecNumber evidence="1">2.3.1.204</ecNumber>
    </recommendedName>
    <alternativeName>
        <fullName evidence="1">Octanoyl-[GcvH]:E2 amidotransferase</fullName>
    </alternativeName>
</protein>
<gene>
    <name evidence="1" type="primary">lipL</name>
    <name type="ordered locus">BA_5635</name>
    <name type="ordered locus">GBAA_5635</name>
    <name type="ordered locus">BAS5237</name>
</gene>
<comment type="function">
    <text evidence="1">Catalyzes the amidotransfer (transamidation) of the octanoyl moiety from octanoyl-GcvH to the lipoyl domain of the E2 subunit of lipoate-dependent enzymes.</text>
</comment>
<comment type="catalytic activity">
    <reaction evidence="1">
        <text>N(6)-octanoyl-L-lysyl-[glycine-cleavage complex H protein] + L-lysyl-[lipoyl-carrier protein] = N(6)-octanoyl-L-lysyl-[lipoyl-carrier protein] + L-lysyl-[glycine-cleavage complex H protein]</text>
        <dbReference type="Rhea" id="RHEA:20213"/>
        <dbReference type="Rhea" id="RHEA-COMP:10500"/>
        <dbReference type="Rhea" id="RHEA-COMP:10501"/>
        <dbReference type="Rhea" id="RHEA-COMP:10503"/>
        <dbReference type="Rhea" id="RHEA-COMP:10504"/>
        <dbReference type="ChEBI" id="CHEBI:29969"/>
        <dbReference type="ChEBI" id="CHEBI:78809"/>
        <dbReference type="EC" id="2.3.1.204"/>
    </reaction>
</comment>
<comment type="pathway">
    <text evidence="1">Protein modification; protein lipoylation via endogenous pathway; protein N(6)-(lipoyl)lysine from octanoyl-[acyl-carrier-protein].</text>
</comment>
<comment type="miscellaneous">
    <text evidence="1">The reaction proceeds via a thioester-linked acyl-enzyme intermediate.</text>
</comment>
<comment type="similarity">
    <text evidence="1">Belongs to the octanoyltransferase LipL family.</text>
</comment>
<organism>
    <name type="scientific">Bacillus anthracis</name>
    <dbReference type="NCBI Taxonomy" id="1392"/>
    <lineage>
        <taxon>Bacteria</taxon>
        <taxon>Bacillati</taxon>
        <taxon>Bacillota</taxon>
        <taxon>Bacilli</taxon>
        <taxon>Bacillales</taxon>
        <taxon>Bacillaceae</taxon>
        <taxon>Bacillus</taxon>
        <taxon>Bacillus cereus group</taxon>
    </lineage>
</organism>
<sequence length="281" mass="31449">MSNSRSILSQPEWRIVDQSSLGPTFHALQSFAMDDTLCTSIGKGESAATMRSWVHHNTIVLGIQDSRLPHLEEGISFLKENNFNVIVRNSGGLAVVLDEGVLNVSLLFQETEKGIDIDLGYDTMWHLIQEMLKDYDVTIEAKEIVGSYCPGSYDLSIRDQKFAGISQRRIRGGVAVQIYLCATGSGSERAALVRDFYNLAIQGEETRFTYPEIVPSTMASLSELLDETITVQDLMMRLLKTLQQFAPKLTPSQLTIDEIPLYETNLQRIIDRNNKALGLEK</sequence>
<evidence type="ECO:0000255" key="1">
    <source>
        <dbReference type="HAMAP-Rule" id="MF_02119"/>
    </source>
</evidence>
<evidence type="ECO:0000255" key="2">
    <source>
        <dbReference type="PROSITE-ProRule" id="PRU01067"/>
    </source>
</evidence>